<keyword id="KW-0414">Isoprene biosynthesis</keyword>
<keyword id="KW-0460">Magnesium</keyword>
<keyword id="KW-0479">Metal-binding</keyword>
<keyword id="KW-1185">Reference proteome</keyword>
<keyword id="KW-0784">Thiamine biosynthesis</keyword>
<keyword id="KW-0786">Thiamine pyrophosphate</keyword>
<keyword id="KW-0808">Transferase</keyword>
<comment type="function">
    <text evidence="1">Catalyzes the acyloin condensation reaction between C atoms 2 and 3 of pyruvate and glyceraldehyde 3-phosphate to yield 1-deoxy-D-xylulose-5-phosphate (DXP).</text>
</comment>
<comment type="catalytic activity">
    <reaction evidence="1">
        <text>D-glyceraldehyde 3-phosphate + pyruvate + H(+) = 1-deoxy-D-xylulose 5-phosphate + CO2</text>
        <dbReference type="Rhea" id="RHEA:12605"/>
        <dbReference type="ChEBI" id="CHEBI:15361"/>
        <dbReference type="ChEBI" id="CHEBI:15378"/>
        <dbReference type="ChEBI" id="CHEBI:16526"/>
        <dbReference type="ChEBI" id="CHEBI:57792"/>
        <dbReference type="ChEBI" id="CHEBI:59776"/>
        <dbReference type="EC" id="2.2.1.7"/>
    </reaction>
</comment>
<comment type="cofactor">
    <cofactor evidence="1">
        <name>Mg(2+)</name>
        <dbReference type="ChEBI" id="CHEBI:18420"/>
    </cofactor>
    <text evidence="1">Binds 1 Mg(2+) ion per subunit.</text>
</comment>
<comment type="cofactor">
    <cofactor evidence="1">
        <name>thiamine diphosphate</name>
        <dbReference type="ChEBI" id="CHEBI:58937"/>
    </cofactor>
    <text evidence="1">Binds 1 thiamine pyrophosphate per subunit.</text>
</comment>
<comment type="pathway">
    <text evidence="1">Metabolic intermediate biosynthesis; 1-deoxy-D-xylulose 5-phosphate biosynthesis; 1-deoxy-D-xylulose 5-phosphate from D-glyceraldehyde 3-phosphate and pyruvate: step 1/1.</text>
</comment>
<comment type="subunit">
    <text evidence="1">Homodimer.</text>
</comment>
<comment type="similarity">
    <text evidence="1">Belongs to the transketolase family. DXPS subfamily.</text>
</comment>
<comment type="sequence caution" evidence="2">
    <conflict type="erroneous initiation">
        <sequence resource="EMBL-CDS" id="AAM41711"/>
    </conflict>
</comment>
<sequence length="638" mass="68395">MIDSTRYPRLSRIQTPDDLRTFEEADLTAVADELRAYLIESVGKSGGHFAAGLGVIELTVALHYLYQTPVDQLVWDVGHQTYPHKILTGRRDQIHTVKQKDGVAPFPKREESVYDTFGVGHSSTSISAALGMAIAAQRNGDDRKVVAVIGDGAMTAGMVYEALNHAGGMDPEPNLLVILNDNRMSISEAVGGLTKMLGRASGSRTLNAIREGGKKILGDKKNNPTARFVRRWEEHWKGMFVPSTLFEEMGFHYTGPIDGHDLPSLVGALKTLKTLKGPQLLHVITTKGKGYELAEGDQIGYHAVGPFDPSKGLVAKAGAKKPTYTDVFSDWVCDMAAADPKMLVITPAMREGSGLVRFSKEYPQRYFDVAIAEQHAVTLAAGMATQGAKPVVAIYSTFLQRGYDQLVHDVAVQKLDVLFAIDRGGVVGPDGATHAGNLDLSFLRCVPHMVVMAPADEAECRQMLTTGLRYEGPAAVRYPRGTGPGTALDAALTTLPIGKAQLRHSGARIALLGFGATVDAAEAVGRELGLTVVNMRFVKPLDKAMLLELAKCHEAFVSIEDNVVAGGAGSGVSELLNAEGVLMPMLHLGLPDSFQHHASREDLLAEAGIDQAGIRAAVLKRWPQLMAKGQQALNAAAG</sequence>
<evidence type="ECO:0000255" key="1">
    <source>
        <dbReference type="HAMAP-Rule" id="MF_00315"/>
    </source>
</evidence>
<evidence type="ECO:0000305" key="2"/>
<proteinExistence type="inferred from homology"/>
<protein>
    <recommendedName>
        <fullName evidence="1">1-deoxy-D-xylulose-5-phosphate synthase</fullName>
        <ecNumber evidence="1">2.2.1.7</ecNumber>
    </recommendedName>
    <alternativeName>
        <fullName evidence="1">1-deoxyxylulose-5-phosphate synthase</fullName>
        <shortName evidence="1">DXP synthase</shortName>
        <shortName evidence="1">DXPS</shortName>
    </alternativeName>
</protein>
<gene>
    <name evidence="1" type="primary">dxs</name>
    <name type="ordered locus">XCC2434</name>
</gene>
<reference key="1">
    <citation type="journal article" date="2002" name="Nature">
        <title>Comparison of the genomes of two Xanthomonas pathogens with differing host specificities.</title>
        <authorList>
            <person name="da Silva A.C.R."/>
            <person name="Ferro J.A."/>
            <person name="Reinach F.C."/>
            <person name="Farah C.S."/>
            <person name="Furlan L.R."/>
            <person name="Quaggio R.B."/>
            <person name="Monteiro-Vitorello C.B."/>
            <person name="Van Sluys M.A."/>
            <person name="Almeida N.F. Jr."/>
            <person name="Alves L.M.C."/>
            <person name="do Amaral A.M."/>
            <person name="Bertolini M.C."/>
            <person name="Camargo L.E.A."/>
            <person name="Camarotte G."/>
            <person name="Cannavan F."/>
            <person name="Cardozo J."/>
            <person name="Chambergo F."/>
            <person name="Ciapina L.P."/>
            <person name="Cicarelli R.M.B."/>
            <person name="Coutinho L.L."/>
            <person name="Cursino-Santos J.R."/>
            <person name="El-Dorry H."/>
            <person name="Faria J.B."/>
            <person name="Ferreira A.J.S."/>
            <person name="Ferreira R.C.C."/>
            <person name="Ferro M.I.T."/>
            <person name="Formighieri E.F."/>
            <person name="Franco M.C."/>
            <person name="Greggio C.C."/>
            <person name="Gruber A."/>
            <person name="Katsuyama A.M."/>
            <person name="Kishi L.T."/>
            <person name="Leite R.P."/>
            <person name="Lemos E.G.M."/>
            <person name="Lemos M.V.F."/>
            <person name="Locali E.C."/>
            <person name="Machado M.A."/>
            <person name="Madeira A.M.B.N."/>
            <person name="Martinez-Rossi N.M."/>
            <person name="Martins E.C."/>
            <person name="Meidanis J."/>
            <person name="Menck C.F.M."/>
            <person name="Miyaki C.Y."/>
            <person name="Moon D.H."/>
            <person name="Moreira L.M."/>
            <person name="Novo M.T.M."/>
            <person name="Okura V.K."/>
            <person name="Oliveira M.C."/>
            <person name="Oliveira V.R."/>
            <person name="Pereira H.A."/>
            <person name="Rossi A."/>
            <person name="Sena J.A.D."/>
            <person name="Silva C."/>
            <person name="de Souza R.F."/>
            <person name="Spinola L.A.F."/>
            <person name="Takita M.A."/>
            <person name="Tamura R.E."/>
            <person name="Teixeira E.C."/>
            <person name="Tezza R.I.D."/>
            <person name="Trindade dos Santos M."/>
            <person name="Truffi D."/>
            <person name="Tsai S.M."/>
            <person name="White F.F."/>
            <person name="Setubal J.C."/>
            <person name="Kitajima J.P."/>
        </authorList>
    </citation>
    <scope>NUCLEOTIDE SEQUENCE [LARGE SCALE GENOMIC DNA]</scope>
    <source>
        <strain>ATCC 33913 / DSM 3586 / NCPPB 528 / LMG 568 / P 25</strain>
    </source>
</reference>
<organism>
    <name type="scientific">Xanthomonas campestris pv. campestris (strain ATCC 33913 / DSM 3586 / NCPPB 528 / LMG 568 / P 25)</name>
    <dbReference type="NCBI Taxonomy" id="190485"/>
    <lineage>
        <taxon>Bacteria</taxon>
        <taxon>Pseudomonadati</taxon>
        <taxon>Pseudomonadota</taxon>
        <taxon>Gammaproteobacteria</taxon>
        <taxon>Lysobacterales</taxon>
        <taxon>Lysobacteraceae</taxon>
        <taxon>Xanthomonas</taxon>
    </lineage>
</organism>
<name>DXS_XANCP</name>
<feature type="chain" id="PRO_0000189176" description="1-deoxy-D-xylulose-5-phosphate synthase">
    <location>
        <begin position="1"/>
        <end position="638"/>
    </location>
</feature>
<feature type="binding site" evidence="1">
    <location>
        <position position="79"/>
    </location>
    <ligand>
        <name>thiamine diphosphate</name>
        <dbReference type="ChEBI" id="CHEBI:58937"/>
    </ligand>
</feature>
<feature type="binding site" evidence="1">
    <location>
        <begin position="120"/>
        <end position="122"/>
    </location>
    <ligand>
        <name>thiamine diphosphate</name>
        <dbReference type="ChEBI" id="CHEBI:58937"/>
    </ligand>
</feature>
<feature type="binding site" evidence="1">
    <location>
        <position position="151"/>
    </location>
    <ligand>
        <name>Mg(2+)</name>
        <dbReference type="ChEBI" id="CHEBI:18420"/>
    </ligand>
</feature>
<feature type="binding site" evidence="1">
    <location>
        <begin position="152"/>
        <end position="153"/>
    </location>
    <ligand>
        <name>thiamine diphosphate</name>
        <dbReference type="ChEBI" id="CHEBI:58937"/>
    </ligand>
</feature>
<feature type="binding site" evidence="1">
    <location>
        <position position="182"/>
    </location>
    <ligand>
        <name>Mg(2+)</name>
        <dbReference type="ChEBI" id="CHEBI:18420"/>
    </ligand>
</feature>
<feature type="binding site" evidence="1">
    <location>
        <position position="182"/>
    </location>
    <ligand>
        <name>thiamine diphosphate</name>
        <dbReference type="ChEBI" id="CHEBI:58937"/>
    </ligand>
</feature>
<feature type="binding site" evidence="1">
    <location>
        <position position="291"/>
    </location>
    <ligand>
        <name>thiamine diphosphate</name>
        <dbReference type="ChEBI" id="CHEBI:58937"/>
    </ligand>
</feature>
<feature type="binding site" evidence="1">
    <location>
        <position position="373"/>
    </location>
    <ligand>
        <name>thiamine diphosphate</name>
        <dbReference type="ChEBI" id="CHEBI:58937"/>
    </ligand>
</feature>
<accession>Q8P815</accession>
<dbReference type="EC" id="2.2.1.7" evidence="1"/>
<dbReference type="EMBL" id="AE008922">
    <property type="protein sequence ID" value="AAM41711.1"/>
    <property type="status" value="ALT_INIT"/>
    <property type="molecule type" value="Genomic_DNA"/>
</dbReference>
<dbReference type="RefSeq" id="NP_637787.2">
    <property type="nucleotide sequence ID" value="NC_003902.1"/>
</dbReference>
<dbReference type="RefSeq" id="WP_011037575.1">
    <property type="nucleotide sequence ID" value="NC_003902.1"/>
</dbReference>
<dbReference type="SMR" id="Q8P815"/>
<dbReference type="STRING" id="190485.XCC2434"/>
<dbReference type="EnsemblBacteria" id="AAM41711">
    <property type="protein sequence ID" value="AAM41711"/>
    <property type="gene ID" value="XCC2434"/>
</dbReference>
<dbReference type="KEGG" id="xcc:XCC2434"/>
<dbReference type="PATRIC" id="fig|190485.4.peg.2597"/>
<dbReference type="eggNOG" id="COG1154">
    <property type="taxonomic scope" value="Bacteria"/>
</dbReference>
<dbReference type="HOGENOM" id="CLU_009227_1_4_6"/>
<dbReference type="OrthoDB" id="9803371at2"/>
<dbReference type="UniPathway" id="UPA00064">
    <property type="reaction ID" value="UER00091"/>
</dbReference>
<dbReference type="Proteomes" id="UP000001010">
    <property type="component" value="Chromosome"/>
</dbReference>
<dbReference type="GO" id="GO:0005829">
    <property type="term" value="C:cytosol"/>
    <property type="evidence" value="ECO:0000318"/>
    <property type="project" value="GO_Central"/>
</dbReference>
<dbReference type="GO" id="GO:0008661">
    <property type="term" value="F:1-deoxy-D-xylulose-5-phosphate synthase activity"/>
    <property type="evidence" value="ECO:0000318"/>
    <property type="project" value="GO_Central"/>
</dbReference>
<dbReference type="GO" id="GO:0000287">
    <property type="term" value="F:magnesium ion binding"/>
    <property type="evidence" value="ECO:0007669"/>
    <property type="project" value="UniProtKB-UniRule"/>
</dbReference>
<dbReference type="GO" id="GO:0030976">
    <property type="term" value="F:thiamine pyrophosphate binding"/>
    <property type="evidence" value="ECO:0007669"/>
    <property type="project" value="UniProtKB-UniRule"/>
</dbReference>
<dbReference type="GO" id="GO:0052865">
    <property type="term" value="P:1-deoxy-D-xylulose 5-phosphate biosynthetic process"/>
    <property type="evidence" value="ECO:0007669"/>
    <property type="project" value="UniProtKB-UniPathway"/>
</dbReference>
<dbReference type="GO" id="GO:0019288">
    <property type="term" value="P:isopentenyl diphosphate biosynthetic process, methylerythritol 4-phosphate pathway"/>
    <property type="evidence" value="ECO:0000318"/>
    <property type="project" value="GO_Central"/>
</dbReference>
<dbReference type="GO" id="GO:0016114">
    <property type="term" value="P:terpenoid biosynthetic process"/>
    <property type="evidence" value="ECO:0007669"/>
    <property type="project" value="UniProtKB-UniRule"/>
</dbReference>
<dbReference type="GO" id="GO:0009228">
    <property type="term" value="P:thiamine biosynthetic process"/>
    <property type="evidence" value="ECO:0007669"/>
    <property type="project" value="UniProtKB-UniRule"/>
</dbReference>
<dbReference type="CDD" id="cd02007">
    <property type="entry name" value="TPP_DXS"/>
    <property type="match status" value="1"/>
</dbReference>
<dbReference type="CDD" id="cd07033">
    <property type="entry name" value="TPP_PYR_DXS_TK_like"/>
    <property type="match status" value="1"/>
</dbReference>
<dbReference type="FunFam" id="3.40.50.920:FF:000002">
    <property type="entry name" value="1-deoxy-D-xylulose-5-phosphate synthase"/>
    <property type="match status" value="1"/>
</dbReference>
<dbReference type="FunFam" id="3.40.50.970:FF:000005">
    <property type="entry name" value="1-deoxy-D-xylulose-5-phosphate synthase"/>
    <property type="match status" value="1"/>
</dbReference>
<dbReference type="Gene3D" id="3.40.50.920">
    <property type="match status" value="1"/>
</dbReference>
<dbReference type="Gene3D" id="3.40.50.970">
    <property type="match status" value="2"/>
</dbReference>
<dbReference type="HAMAP" id="MF_00315">
    <property type="entry name" value="DXP_synth"/>
    <property type="match status" value="1"/>
</dbReference>
<dbReference type="InterPro" id="IPR005477">
    <property type="entry name" value="Dxylulose-5-P_synthase"/>
</dbReference>
<dbReference type="InterPro" id="IPR029061">
    <property type="entry name" value="THDP-binding"/>
</dbReference>
<dbReference type="InterPro" id="IPR009014">
    <property type="entry name" value="Transketo_C/PFOR_II"/>
</dbReference>
<dbReference type="InterPro" id="IPR005475">
    <property type="entry name" value="Transketolase-like_Pyr-bd"/>
</dbReference>
<dbReference type="InterPro" id="IPR020826">
    <property type="entry name" value="Transketolase_BS"/>
</dbReference>
<dbReference type="InterPro" id="IPR033248">
    <property type="entry name" value="Transketolase_C"/>
</dbReference>
<dbReference type="InterPro" id="IPR049557">
    <property type="entry name" value="Transketolase_CS"/>
</dbReference>
<dbReference type="NCBIfam" id="TIGR00204">
    <property type="entry name" value="dxs"/>
    <property type="match status" value="1"/>
</dbReference>
<dbReference type="NCBIfam" id="NF003933">
    <property type="entry name" value="PRK05444.2-2"/>
    <property type="match status" value="1"/>
</dbReference>
<dbReference type="PANTHER" id="PTHR43322">
    <property type="entry name" value="1-D-DEOXYXYLULOSE 5-PHOSPHATE SYNTHASE-RELATED"/>
    <property type="match status" value="1"/>
</dbReference>
<dbReference type="PANTHER" id="PTHR43322:SF5">
    <property type="entry name" value="1-DEOXY-D-XYLULOSE-5-PHOSPHATE SYNTHASE, CHLOROPLASTIC"/>
    <property type="match status" value="1"/>
</dbReference>
<dbReference type="Pfam" id="PF13292">
    <property type="entry name" value="DXP_synthase_N"/>
    <property type="match status" value="1"/>
</dbReference>
<dbReference type="Pfam" id="PF02779">
    <property type="entry name" value="Transket_pyr"/>
    <property type="match status" value="1"/>
</dbReference>
<dbReference type="Pfam" id="PF02780">
    <property type="entry name" value="Transketolase_C"/>
    <property type="match status" value="1"/>
</dbReference>
<dbReference type="SMART" id="SM00861">
    <property type="entry name" value="Transket_pyr"/>
    <property type="match status" value="1"/>
</dbReference>
<dbReference type="SUPFAM" id="SSF52518">
    <property type="entry name" value="Thiamin diphosphate-binding fold (THDP-binding)"/>
    <property type="match status" value="2"/>
</dbReference>
<dbReference type="SUPFAM" id="SSF52922">
    <property type="entry name" value="TK C-terminal domain-like"/>
    <property type="match status" value="1"/>
</dbReference>
<dbReference type="PROSITE" id="PS00801">
    <property type="entry name" value="TRANSKETOLASE_1"/>
    <property type="match status" value="1"/>
</dbReference>
<dbReference type="PROSITE" id="PS00802">
    <property type="entry name" value="TRANSKETOLASE_2"/>
    <property type="match status" value="1"/>
</dbReference>